<reference key="1">
    <citation type="journal article" date="1995" name="J. Biol. Chem.">
        <title>Structure and expression of a smooth muscle cell-specific gene, SM22 alpha.</title>
        <authorList>
            <person name="Solway J."/>
            <person name="Seltzer J."/>
            <person name="Samaha F.F."/>
            <person name="Kim S."/>
            <person name="Alger L.E."/>
            <person name="Niu Q."/>
            <person name="Morrisey E.E."/>
            <person name="Ip H.S."/>
            <person name="Parmacek M.S."/>
        </authorList>
    </citation>
    <scope>NUCLEOTIDE SEQUENCE [GENOMIC DNA / MRNA]</scope>
    <source>
        <strain>129/Sv</strain>
        <tissue>Liver</tissue>
    </source>
</reference>
<reference key="2">
    <citation type="journal article" date="1989" name="Exp. Cell Res.">
        <title>Expression, cloning and cDNA sequence of a fibroblast serum-regulated gene encoding a putative actin-associated protein (p27).</title>
        <authorList>
            <person name="Almendral J.M."/>
            <person name="Santaren J.F."/>
            <person name="Perera J."/>
            <person name="Zerial M."/>
            <person name="Bravo R."/>
        </authorList>
    </citation>
    <scope>NUCLEOTIDE SEQUENCE</scope>
</reference>
<reference key="3">
    <citation type="submission" date="1996-01" db="EMBL/GenBank/DDBJ databases">
        <authorList>
            <person name="Moessler H."/>
            <person name="Mericskay M."/>
            <person name="Li Z."/>
            <person name="Nagl S."/>
            <person name="Small J.V."/>
            <person name="Paulin D."/>
        </authorList>
    </citation>
    <scope>NUCLEOTIDE SEQUENCE [GENOMIC DNA]</scope>
    <source>
        <strain>C57BL/6J</strain>
        <tissue>Liver</tissue>
    </source>
</reference>
<reference key="4">
    <citation type="journal article" date="1996" name="Circ. Res.">
        <title>SM22 alpha, a marker of adult smooth muscle, is expressed in multiple myogenic lineages during embryogenesis.</title>
        <authorList>
            <person name="Li L."/>
            <person name="Miano J.M."/>
            <person name="Cserjesi P."/>
            <person name="Olson E.N."/>
        </authorList>
    </citation>
    <scope>NUCLEOTIDE SEQUENCE [MRNA]</scope>
    <source>
        <strain>SWR/J</strain>
    </source>
</reference>
<reference key="5">
    <citation type="journal article" date="2005" name="Science">
        <title>The transcriptional landscape of the mammalian genome.</title>
        <authorList>
            <person name="Carninci P."/>
            <person name="Kasukawa T."/>
            <person name="Katayama S."/>
            <person name="Gough J."/>
            <person name="Frith M.C."/>
            <person name="Maeda N."/>
            <person name="Oyama R."/>
            <person name="Ravasi T."/>
            <person name="Lenhard B."/>
            <person name="Wells C."/>
            <person name="Kodzius R."/>
            <person name="Shimokawa K."/>
            <person name="Bajic V.B."/>
            <person name="Brenner S.E."/>
            <person name="Batalov S."/>
            <person name="Forrest A.R."/>
            <person name="Zavolan M."/>
            <person name="Davis M.J."/>
            <person name="Wilming L.G."/>
            <person name="Aidinis V."/>
            <person name="Allen J.E."/>
            <person name="Ambesi-Impiombato A."/>
            <person name="Apweiler R."/>
            <person name="Aturaliya R.N."/>
            <person name="Bailey T.L."/>
            <person name="Bansal M."/>
            <person name="Baxter L."/>
            <person name="Beisel K.W."/>
            <person name="Bersano T."/>
            <person name="Bono H."/>
            <person name="Chalk A.M."/>
            <person name="Chiu K.P."/>
            <person name="Choudhary V."/>
            <person name="Christoffels A."/>
            <person name="Clutterbuck D.R."/>
            <person name="Crowe M.L."/>
            <person name="Dalla E."/>
            <person name="Dalrymple B.P."/>
            <person name="de Bono B."/>
            <person name="Della Gatta G."/>
            <person name="di Bernardo D."/>
            <person name="Down T."/>
            <person name="Engstrom P."/>
            <person name="Fagiolini M."/>
            <person name="Faulkner G."/>
            <person name="Fletcher C.F."/>
            <person name="Fukushima T."/>
            <person name="Furuno M."/>
            <person name="Futaki S."/>
            <person name="Gariboldi M."/>
            <person name="Georgii-Hemming P."/>
            <person name="Gingeras T.R."/>
            <person name="Gojobori T."/>
            <person name="Green R.E."/>
            <person name="Gustincich S."/>
            <person name="Harbers M."/>
            <person name="Hayashi Y."/>
            <person name="Hensch T.K."/>
            <person name="Hirokawa N."/>
            <person name="Hill D."/>
            <person name="Huminiecki L."/>
            <person name="Iacono M."/>
            <person name="Ikeo K."/>
            <person name="Iwama A."/>
            <person name="Ishikawa T."/>
            <person name="Jakt M."/>
            <person name="Kanapin A."/>
            <person name="Katoh M."/>
            <person name="Kawasawa Y."/>
            <person name="Kelso J."/>
            <person name="Kitamura H."/>
            <person name="Kitano H."/>
            <person name="Kollias G."/>
            <person name="Krishnan S.P."/>
            <person name="Kruger A."/>
            <person name="Kummerfeld S.K."/>
            <person name="Kurochkin I.V."/>
            <person name="Lareau L.F."/>
            <person name="Lazarevic D."/>
            <person name="Lipovich L."/>
            <person name="Liu J."/>
            <person name="Liuni S."/>
            <person name="McWilliam S."/>
            <person name="Madan Babu M."/>
            <person name="Madera M."/>
            <person name="Marchionni L."/>
            <person name="Matsuda H."/>
            <person name="Matsuzawa S."/>
            <person name="Miki H."/>
            <person name="Mignone F."/>
            <person name="Miyake S."/>
            <person name="Morris K."/>
            <person name="Mottagui-Tabar S."/>
            <person name="Mulder N."/>
            <person name="Nakano N."/>
            <person name="Nakauchi H."/>
            <person name="Ng P."/>
            <person name="Nilsson R."/>
            <person name="Nishiguchi S."/>
            <person name="Nishikawa S."/>
            <person name="Nori F."/>
            <person name="Ohara O."/>
            <person name="Okazaki Y."/>
            <person name="Orlando V."/>
            <person name="Pang K.C."/>
            <person name="Pavan W.J."/>
            <person name="Pavesi G."/>
            <person name="Pesole G."/>
            <person name="Petrovsky N."/>
            <person name="Piazza S."/>
            <person name="Reed J."/>
            <person name="Reid J.F."/>
            <person name="Ring B.Z."/>
            <person name="Ringwald M."/>
            <person name="Rost B."/>
            <person name="Ruan Y."/>
            <person name="Salzberg S.L."/>
            <person name="Sandelin A."/>
            <person name="Schneider C."/>
            <person name="Schoenbach C."/>
            <person name="Sekiguchi K."/>
            <person name="Semple C.A."/>
            <person name="Seno S."/>
            <person name="Sessa L."/>
            <person name="Sheng Y."/>
            <person name="Shibata Y."/>
            <person name="Shimada H."/>
            <person name="Shimada K."/>
            <person name="Silva D."/>
            <person name="Sinclair B."/>
            <person name="Sperling S."/>
            <person name="Stupka E."/>
            <person name="Sugiura K."/>
            <person name="Sultana R."/>
            <person name="Takenaka Y."/>
            <person name="Taki K."/>
            <person name="Tammoja K."/>
            <person name="Tan S.L."/>
            <person name="Tang S."/>
            <person name="Taylor M.S."/>
            <person name="Tegner J."/>
            <person name="Teichmann S.A."/>
            <person name="Ueda H.R."/>
            <person name="van Nimwegen E."/>
            <person name="Verardo R."/>
            <person name="Wei C.L."/>
            <person name="Yagi K."/>
            <person name="Yamanishi H."/>
            <person name="Zabarovsky E."/>
            <person name="Zhu S."/>
            <person name="Zimmer A."/>
            <person name="Hide W."/>
            <person name="Bult C."/>
            <person name="Grimmond S.M."/>
            <person name="Teasdale R.D."/>
            <person name="Liu E.T."/>
            <person name="Brusic V."/>
            <person name="Quackenbush J."/>
            <person name="Wahlestedt C."/>
            <person name="Mattick J.S."/>
            <person name="Hume D.A."/>
            <person name="Kai C."/>
            <person name="Sasaki D."/>
            <person name="Tomaru Y."/>
            <person name="Fukuda S."/>
            <person name="Kanamori-Katayama M."/>
            <person name="Suzuki M."/>
            <person name="Aoki J."/>
            <person name="Arakawa T."/>
            <person name="Iida J."/>
            <person name="Imamura K."/>
            <person name="Itoh M."/>
            <person name="Kato T."/>
            <person name="Kawaji H."/>
            <person name="Kawagashira N."/>
            <person name="Kawashima T."/>
            <person name="Kojima M."/>
            <person name="Kondo S."/>
            <person name="Konno H."/>
            <person name="Nakano K."/>
            <person name="Ninomiya N."/>
            <person name="Nishio T."/>
            <person name="Okada M."/>
            <person name="Plessy C."/>
            <person name="Shibata K."/>
            <person name="Shiraki T."/>
            <person name="Suzuki S."/>
            <person name="Tagami M."/>
            <person name="Waki K."/>
            <person name="Watahiki A."/>
            <person name="Okamura-Oho Y."/>
            <person name="Suzuki H."/>
            <person name="Kawai J."/>
            <person name="Hayashizaki Y."/>
        </authorList>
    </citation>
    <scope>NUCLEOTIDE SEQUENCE [LARGE SCALE MRNA]</scope>
    <source>
        <strain>C57BL/6J</strain>
        <tissue>Kidney</tissue>
        <tissue>Ovary</tissue>
        <tissue>Uterus</tissue>
    </source>
</reference>
<reference key="6">
    <citation type="journal article" date="2004" name="Genome Res.">
        <title>The status, quality, and expansion of the NIH full-length cDNA project: the Mammalian Gene Collection (MGC).</title>
        <authorList>
            <consortium name="The MGC Project Team"/>
        </authorList>
    </citation>
    <scope>NUCLEOTIDE SEQUENCE [LARGE SCALE MRNA]</scope>
    <source>
        <strain>FVB/N</strain>
        <tissue>Mammary gland</tissue>
    </source>
</reference>
<reference key="7">
    <citation type="journal article" date="2010" name="Cell">
        <title>A tissue-specific atlas of mouse protein phosphorylation and expression.</title>
        <authorList>
            <person name="Huttlin E.L."/>
            <person name="Jedrychowski M.P."/>
            <person name="Elias J.E."/>
            <person name="Goswami T."/>
            <person name="Rad R."/>
            <person name="Beausoleil S.A."/>
            <person name="Villen J."/>
            <person name="Haas W."/>
            <person name="Sowa M.E."/>
            <person name="Gygi S.P."/>
        </authorList>
    </citation>
    <scope>IDENTIFICATION BY MASS SPECTROMETRY [LARGE SCALE ANALYSIS]</scope>
    <source>
        <tissue>Brain</tissue>
        <tissue>Brown adipose tissue</tissue>
        <tissue>Heart</tissue>
        <tissue>Kidney</tissue>
        <tissue>Liver</tissue>
        <tissue>Lung</tissue>
        <tissue>Pancreas</tissue>
        <tissue>Spleen</tissue>
        <tissue>Testis</tissue>
    </source>
</reference>
<reference key="8">
    <citation type="journal article" date="2013" name="Mol. Cell">
        <title>SIRT5-mediated lysine desuccinylation impacts diverse metabolic pathways.</title>
        <authorList>
            <person name="Park J."/>
            <person name="Chen Y."/>
            <person name="Tishkoff D.X."/>
            <person name="Peng C."/>
            <person name="Tan M."/>
            <person name="Dai L."/>
            <person name="Xie Z."/>
            <person name="Zhang Y."/>
            <person name="Zwaans B.M."/>
            <person name="Skinner M.E."/>
            <person name="Lombard D.B."/>
            <person name="Zhao Y."/>
        </authorList>
    </citation>
    <scope>ACETYLATION [LARGE SCALE ANALYSIS] AT LYS-172</scope>
    <scope>IDENTIFICATION BY MASS SPECTROMETRY [LARGE SCALE ANALYSIS]</scope>
    <source>
        <tissue>Embryonic fibroblast</tissue>
    </source>
</reference>
<reference key="9">
    <citation type="journal article" date="2014" name="Mol. Cell. Proteomics">
        <title>Immunoaffinity enrichment and mass spectrometry analysis of protein methylation.</title>
        <authorList>
            <person name="Guo A."/>
            <person name="Gu H."/>
            <person name="Zhou J."/>
            <person name="Mulhern D."/>
            <person name="Wang Y."/>
            <person name="Lee K.A."/>
            <person name="Yang V."/>
            <person name="Aguiar M."/>
            <person name="Kornhauser J."/>
            <person name="Jia X."/>
            <person name="Ren J."/>
            <person name="Beausoleil S.A."/>
            <person name="Silva J.C."/>
            <person name="Vemulapalli V."/>
            <person name="Bedford M.T."/>
            <person name="Comb M.J."/>
        </authorList>
    </citation>
    <scope>METHYLATION [LARGE SCALE ANALYSIS] AT ARG-183</scope>
    <scope>IDENTIFICATION BY MASS SPECTROMETRY [LARGE SCALE ANALYSIS]</scope>
    <source>
        <tissue>Brain</tissue>
        <tissue>Embryo</tissue>
    </source>
</reference>
<reference key="10">
    <citation type="submission" date="2004-09" db="PDB data bank">
        <title>Solution structure of the CH domain from mouse transgelin.</title>
        <authorList>
            <consortium name="RIKEN structural genomics initiative (RSGI)"/>
        </authorList>
    </citation>
    <scope>STRUCTURE BY NMR OF 24-154</scope>
</reference>
<gene>
    <name type="primary">Tagln</name>
    <name type="synonym">Sm22</name>
    <name type="synonym">Sm22a</name>
</gene>
<sequence>MANKGPSYGMSREVQSKIEKKYDEELEERLVEWIVVQCGPDVGRPDRGRLGFQVWLKNGVILSKLVNSLYPEGSKPVKVPENPPSMVFKQMEQVAQFLKAAEDYGVIKTDMFQTVDLYEGKDMAAVQRTLMALGSLAVTKNDGNYRGDPNWFMKKAQEHKRDFTDSQLQEGKHVIGLQMGSNRGASQAGMTGYGRPRQIIS</sequence>
<organism>
    <name type="scientific">Mus musculus</name>
    <name type="common">Mouse</name>
    <dbReference type="NCBI Taxonomy" id="10090"/>
    <lineage>
        <taxon>Eukaryota</taxon>
        <taxon>Metazoa</taxon>
        <taxon>Chordata</taxon>
        <taxon>Craniata</taxon>
        <taxon>Vertebrata</taxon>
        <taxon>Euteleostomi</taxon>
        <taxon>Mammalia</taxon>
        <taxon>Eutheria</taxon>
        <taxon>Euarchontoglires</taxon>
        <taxon>Glires</taxon>
        <taxon>Rodentia</taxon>
        <taxon>Myomorpha</taxon>
        <taxon>Muroidea</taxon>
        <taxon>Muridae</taxon>
        <taxon>Murinae</taxon>
        <taxon>Mus</taxon>
        <taxon>Mus</taxon>
    </lineage>
</organism>
<keyword id="KW-0002">3D-structure</keyword>
<keyword id="KW-0007">Acetylation</keyword>
<keyword id="KW-0963">Cytoplasm</keyword>
<keyword id="KW-0488">Methylation</keyword>
<keyword id="KW-0514">Muscle protein</keyword>
<keyword id="KW-0597">Phosphoprotein</keyword>
<keyword id="KW-1185">Reference proteome</keyword>
<proteinExistence type="evidence at protein level"/>
<accession>P37804</accession>
<accession>Q545W0</accession>
<name>TAGL_MOUSE</name>
<feature type="initiator methionine" description="Removed" evidence="3">
    <location>
        <position position="1"/>
    </location>
</feature>
<feature type="chain" id="PRO_0000204782" description="Transgelin">
    <location>
        <begin position="2"/>
        <end position="201"/>
    </location>
</feature>
<feature type="domain" description="Calponin-homology (CH)" evidence="4">
    <location>
        <begin position="24"/>
        <end position="137"/>
    </location>
</feature>
<feature type="repeat" description="Calponin-like">
    <location>
        <begin position="175"/>
        <end position="200"/>
    </location>
</feature>
<feature type="modified residue" description="N-acetylalanine" evidence="2 3">
    <location>
        <position position="2"/>
    </location>
</feature>
<feature type="modified residue" description="Phosphoserine" evidence="2">
    <location>
        <position position="166"/>
    </location>
</feature>
<feature type="modified residue" description="N6-acetyllysine" evidence="6">
    <location>
        <position position="172"/>
    </location>
</feature>
<feature type="modified residue" description="Phosphoserine" evidence="2">
    <location>
        <position position="181"/>
    </location>
</feature>
<feature type="modified residue" description="Omega-N-methylarginine" evidence="7">
    <location>
        <position position="183"/>
    </location>
</feature>
<feature type="sequence conflict" description="In Ref. 2; no nucleotide entry." evidence="5" ref="2">
    <original>R</original>
    <variation>A</variation>
    <location>
        <position position="44"/>
    </location>
</feature>
<feature type="helix" evidence="8">
    <location>
        <begin position="25"/>
        <end position="38"/>
    </location>
</feature>
<feature type="strand" evidence="8">
    <location>
        <begin position="47"/>
        <end position="51"/>
    </location>
</feature>
<feature type="helix" evidence="8">
    <location>
        <begin position="52"/>
        <end position="55"/>
    </location>
</feature>
<feature type="helix" evidence="8">
    <location>
        <begin position="60"/>
        <end position="69"/>
    </location>
</feature>
<feature type="turn" evidence="8">
    <location>
        <begin position="72"/>
        <end position="74"/>
    </location>
</feature>
<feature type="helix" evidence="8">
    <location>
        <begin position="87"/>
        <end position="104"/>
    </location>
</feature>
<feature type="strand" evidence="8">
    <location>
        <begin position="108"/>
        <end position="110"/>
    </location>
</feature>
<feature type="helix" evidence="8">
    <location>
        <begin position="114"/>
        <end position="118"/>
    </location>
</feature>
<feature type="helix" evidence="8">
    <location>
        <begin position="123"/>
        <end position="140"/>
    </location>
</feature>
<feature type="turn" evidence="8">
    <location>
        <begin position="150"/>
        <end position="152"/>
    </location>
</feature>
<evidence type="ECO:0000250" key="1"/>
<evidence type="ECO:0000250" key="2">
    <source>
        <dbReference type="UniProtKB" id="Q01995"/>
    </source>
</evidence>
<evidence type="ECO:0000255" key="3"/>
<evidence type="ECO:0000255" key="4">
    <source>
        <dbReference type="PROSITE-ProRule" id="PRU00044"/>
    </source>
</evidence>
<evidence type="ECO:0000305" key="5"/>
<evidence type="ECO:0007744" key="6">
    <source>
    </source>
</evidence>
<evidence type="ECO:0007744" key="7">
    <source>
    </source>
</evidence>
<evidence type="ECO:0007829" key="8">
    <source>
        <dbReference type="PDB" id="1UJO"/>
    </source>
</evidence>
<dbReference type="EMBL" id="L41170">
    <property type="protein sequence ID" value="AAA79165.1"/>
    <property type="molecule type" value="Genomic_DNA"/>
</dbReference>
<dbReference type="EMBL" id="L41169">
    <property type="protein sequence ID" value="AAA79165.1"/>
    <property type="status" value="JOINED"/>
    <property type="molecule type" value="Genomic_DNA"/>
</dbReference>
<dbReference type="EMBL" id="L41154">
    <property type="protein sequence ID" value="AAA79166.1"/>
    <property type="molecule type" value="mRNA"/>
</dbReference>
<dbReference type="EMBL" id="Z68618">
    <property type="protein sequence ID" value="CAA92941.1"/>
    <property type="molecule type" value="Genomic_DNA"/>
</dbReference>
<dbReference type="EMBL" id="U36588">
    <property type="protein sequence ID" value="AAC52418.1"/>
    <property type="molecule type" value="mRNA"/>
</dbReference>
<dbReference type="EMBL" id="AK002880">
    <property type="protein sequence ID" value="BAB22427.1"/>
    <property type="molecule type" value="mRNA"/>
</dbReference>
<dbReference type="EMBL" id="AK077235">
    <property type="protein sequence ID" value="BAC36700.1"/>
    <property type="molecule type" value="mRNA"/>
</dbReference>
<dbReference type="EMBL" id="BC003795">
    <property type="protein sequence ID" value="AAH03795.1"/>
    <property type="molecule type" value="mRNA"/>
</dbReference>
<dbReference type="CCDS" id="CCDS23137.1"/>
<dbReference type="PIR" id="A57015">
    <property type="entry name" value="A57015"/>
</dbReference>
<dbReference type="PIR" id="A60598">
    <property type="entry name" value="A60598"/>
</dbReference>
<dbReference type="RefSeq" id="NP_035656.1">
    <property type="nucleotide sequence ID" value="NM_011526.5"/>
</dbReference>
<dbReference type="PDB" id="1UJO">
    <property type="method" value="NMR"/>
    <property type="chains" value="A=24-154"/>
</dbReference>
<dbReference type="PDBsum" id="1UJO"/>
<dbReference type="BMRB" id="P37804"/>
<dbReference type="SMR" id="P37804"/>
<dbReference type="BioGRID" id="203960">
    <property type="interactions" value="14"/>
</dbReference>
<dbReference type="FunCoup" id="P37804">
    <property type="interactions" value="430"/>
</dbReference>
<dbReference type="IntAct" id="P37804">
    <property type="interactions" value="2"/>
</dbReference>
<dbReference type="MINT" id="P37804"/>
<dbReference type="STRING" id="10090.ENSMUSP00000034590"/>
<dbReference type="GlyGen" id="P37804">
    <property type="glycosylation" value="1 site, 1 O-linked glycan (1 site)"/>
</dbReference>
<dbReference type="iPTMnet" id="P37804"/>
<dbReference type="PhosphoSitePlus" id="P37804"/>
<dbReference type="SwissPalm" id="P37804"/>
<dbReference type="REPRODUCTION-2DPAGE" id="IPI00226515"/>
<dbReference type="CPTAC" id="non-CPTAC-3751"/>
<dbReference type="jPOST" id="P37804"/>
<dbReference type="PaxDb" id="10090-ENSMUSP00000034590"/>
<dbReference type="PeptideAtlas" id="P37804"/>
<dbReference type="ProteomicsDB" id="262928"/>
<dbReference type="Pumba" id="P37804"/>
<dbReference type="Antibodypedia" id="3666">
    <property type="antibodies" value="739 antibodies from 40 providers"/>
</dbReference>
<dbReference type="DNASU" id="21345"/>
<dbReference type="Ensembl" id="ENSMUST00000034590.4">
    <property type="protein sequence ID" value="ENSMUSP00000034590.3"/>
    <property type="gene ID" value="ENSMUSG00000032085.6"/>
</dbReference>
<dbReference type="GeneID" id="21345"/>
<dbReference type="KEGG" id="mmu:21345"/>
<dbReference type="UCSC" id="uc009pgs.2">
    <property type="organism name" value="mouse"/>
</dbReference>
<dbReference type="AGR" id="MGI:106012"/>
<dbReference type="CTD" id="6876"/>
<dbReference type="MGI" id="MGI:106012">
    <property type="gene designation" value="Tagln"/>
</dbReference>
<dbReference type="VEuPathDB" id="HostDB:ENSMUSG00000032085"/>
<dbReference type="eggNOG" id="KOG2046">
    <property type="taxonomic scope" value="Eukaryota"/>
</dbReference>
<dbReference type="GeneTree" id="ENSGT00940000155162"/>
<dbReference type="HOGENOM" id="CLU_055232_1_0_1"/>
<dbReference type="InParanoid" id="P37804"/>
<dbReference type="OMA" id="NWFHRKA"/>
<dbReference type="OrthoDB" id="21595at2759"/>
<dbReference type="PhylomeDB" id="P37804"/>
<dbReference type="TreeFam" id="TF313921"/>
<dbReference type="BioGRID-ORCS" id="21345">
    <property type="hits" value="1 hit in 78 CRISPR screens"/>
</dbReference>
<dbReference type="ChiTaRS" id="Tagln">
    <property type="organism name" value="mouse"/>
</dbReference>
<dbReference type="EvolutionaryTrace" id="P37804"/>
<dbReference type="PRO" id="PR:P37804"/>
<dbReference type="Proteomes" id="UP000000589">
    <property type="component" value="Chromosome 9"/>
</dbReference>
<dbReference type="RNAct" id="P37804">
    <property type="molecule type" value="protein"/>
</dbReference>
<dbReference type="Bgee" id="ENSMUSG00000032085">
    <property type="expression patterns" value="Expressed in aorta tunica media and 244 other cell types or tissues"/>
</dbReference>
<dbReference type="ExpressionAtlas" id="P37804">
    <property type="expression patterns" value="baseline and differential"/>
</dbReference>
<dbReference type="GO" id="GO:0005737">
    <property type="term" value="C:cytoplasm"/>
    <property type="evidence" value="ECO:0007669"/>
    <property type="project" value="UniProtKB-SubCell"/>
</dbReference>
<dbReference type="GO" id="GO:0030855">
    <property type="term" value="P:epithelial cell differentiation"/>
    <property type="evidence" value="ECO:0007669"/>
    <property type="project" value="Ensembl"/>
</dbReference>
<dbReference type="CDD" id="cd21279">
    <property type="entry name" value="CH_TAGLN"/>
    <property type="match status" value="1"/>
</dbReference>
<dbReference type="FunFam" id="1.10.418.10:FF:000039">
    <property type="entry name" value="Transgelin"/>
    <property type="match status" value="1"/>
</dbReference>
<dbReference type="Gene3D" id="1.10.418.10">
    <property type="entry name" value="Calponin-like domain"/>
    <property type="match status" value="1"/>
</dbReference>
<dbReference type="InterPro" id="IPR050606">
    <property type="entry name" value="Calponin-like"/>
</dbReference>
<dbReference type="InterPro" id="IPR000557">
    <property type="entry name" value="Calponin_repeat"/>
</dbReference>
<dbReference type="InterPro" id="IPR001715">
    <property type="entry name" value="CH_dom"/>
</dbReference>
<dbReference type="InterPro" id="IPR036872">
    <property type="entry name" value="CH_dom_sf"/>
</dbReference>
<dbReference type="InterPro" id="IPR003096">
    <property type="entry name" value="SM22_calponin"/>
</dbReference>
<dbReference type="PANTHER" id="PTHR47385">
    <property type="entry name" value="CALPONIN"/>
    <property type="match status" value="1"/>
</dbReference>
<dbReference type="PANTHER" id="PTHR47385:SF16">
    <property type="entry name" value="TRANSGELIN"/>
    <property type="match status" value="1"/>
</dbReference>
<dbReference type="Pfam" id="PF00402">
    <property type="entry name" value="Calponin"/>
    <property type="match status" value="1"/>
</dbReference>
<dbReference type="Pfam" id="PF00307">
    <property type="entry name" value="CH"/>
    <property type="match status" value="1"/>
</dbReference>
<dbReference type="PRINTS" id="PR00888">
    <property type="entry name" value="SM22CALPONIN"/>
</dbReference>
<dbReference type="PRINTS" id="PR00890">
    <property type="entry name" value="TRANSGELIN"/>
</dbReference>
<dbReference type="SMART" id="SM00033">
    <property type="entry name" value="CH"/>
    <property type="match status" value="1"/>
</dbReference>
<dbReference type="SUPFAM" id="SSF47576">
    <property type="entry name" value="Calponin-homology domain, CH-domain"/>
    <property type="match status" value="1"/>
</dbReference>
<dbReference type="PROSITE" id="PS01052">
    <property type="entry name" value="CALPONIN_1"/>
    <property type="match status" value="1"/>
</dbReference>
<dbReference type="PROSITE" id="PS51122">
    <property type="entry name" value="CALPONIN_2"/>
    <property type="match status" value="1"/>
</dbReference>
<dbReference type="PROSITE" id="PS50021">
    <property type="entry name" value="CH"/>
    <property type="match status" value="1"/>
</dbReference>
<protein>
    <recommendedName>
        <fullName>Transgelin</fullName>
    </recommendedName>
    <alternativeName>
        <fullName>Actin-associated protein p27</fullName>
    </alternativeName>
    <alternativeName>
        <fullName>Smooth muscle protein 22-alpha</fullName>
        <shortName>SM22-alpha</shortName>
    </alternativeName>
</protein>
<comment type="function">
    <text evidence="1">Actin cross-linking/gelling protein.</text>
</comment>
<comment type="subcellular location">
    <subcellularLocation>
        <location evidence="5">Cytoplasm</location>
    </subcellularLocation>
</comment>
<comment type="induction">
    <text>By growth factors.</text>
</comment>
<comment type="similarity">
    <text evidence="5">Belongs to the calponin family.</text>
</comment>